<organismHost>
    <name type="scientific">Galliformes</name>
    <dbReference type="NCBI Taxonomy" id="8976"/>
</organismHost>
<evidence type="ECO:0000255" key="1"/>
<evidence type="ECO:0000305" key="2"/>
<accession>Q64764</accession>
<sequence length="107" mass="11801">MCTGSTGSLIPSVSDSANSVRRGNLSLCSVLLSWLICAMCLWNDARESLVNVRIANYVFDFAVLWTLLARVLGPPGRPVLQQHHPVQLPVPTEPSVFVKLCNQRVRL</sequence>
<feature type="chain" id="PRO_0000339002" description="Uncharacterized protein ORF21">
    <location>
        <begin position="1"/>
        <end position="107"/>
    </location>
</feature>
<feature type="transmembrane region" description="Helical" evidence="1">
    <location>
        <begin position="25"/>
        <end position="42"/>
    </location>
</feature>
<name>YO21_ADEG1</name>
<keyword id="KW-1043">Host membrane</keyword>
<keyword id="KW-0472">Membrane</keyword>
<keyword id="KW-1185">Reference proteome</keyword>
<keyword id="KW-0812">Transmembrane</keyword>
<keyword id="KW-1133">Transmembrane helix</keyword>
<organism>
    <name type="scientific">Fowl adenovirus A serotype 1 (strain CELO / Phelps)</name>
    <name type="common">FAdV-1</name>
    <name type="synonym">Avian adenovirus gal1 (strain Phelps)</name>
    <dbReference type="NCBI Taxonomy" id="10553"/>
    <lineage>
        <taxon>Viruses</taxon>
        <taxon>Varidnaviria</taxon>
        <taxon>Bamfordvirae</taxon>
        <taxon>Preplasmiviricota</taxon>
        <taxon>Tectiliviricetes</taxon>
        <taxon>Rowavirales</taxon>
        <taxon>Adenoviridae</taxon>
        <taxon>Aviadenovirus</taxon>
        <taxon>Fowl aviadenovirus A</taxon>
    </lineage>
</organism>
<reference key="1">
    <citation type="journal article" date="1996" name="J. Virol.">
        <title>The complete DNA sequence and genomic organization of the avian adenovirus CELO.</title>
        <authorList>
            <person name="Chiocca S."/>
            <person name="Kurzbauer R."/>
            <person name="Schaffner G."/>
            <person name="Baker A."/>
            <person name="Mautner V."/>
            <person name="Cotten M."/>
        </authorList>
    </citation>
    <scope>NUCLEOTIDE SEQUENCE [LARGE SCALE GENOMIC DNA]</scope>
</reference>
<gene>
    <name type="ORF">21</name>
</gene>
<protein>
    <recommendedName>
        <fullName>Uncharacterized protein ORF21</fullName>
    </recommendedName>
</protein>
<dbReference type="EMBL" id="U46933">
    <property type="protein sequence ID" value="AAC54920.1"/>
    <property type="molecule type" value="Genomic_DNA"/>
</dbReference>
<dbReference type="RefSeq" id="NP_043894.1">
    <property type="nucleotide sequence ID" value="NC_001720.1"/>
</dbReference>
<dbReference type="KEGG" id="vg:1733462"/>
<dbReference type="Proteomes" id="UP000001594">
    <property type="component" value="Segment"/>
</dbReference>
<dbReference type="GO" id="GO:0033644">
    <property type="term" value="C:host cell membrane"/>
    <property type="evidence" value="ECO:0007669"/>
    <property type="project" value="UniProtKB-SubCell"/>
</dbReference>
<dbReference type="GO" id="GO:0016020">
    <property type="term" value="C:membrane"/>
    <property type="evidence" value="ECO:0007669"/>
    <property type="project" value="UniProtKB-KW"/>
</dbReference>
<comment type="subcellular location">
    <subcellularLocation>
        <location evidence="2">Host membrane</location>
        <topology evidence="2">Single-pass membrane protein</topology>
    </subcellularLocation>
</comment>
<proteinExistence type="predicted"/>